<comment type="subcellular location">
    <subcellularLocation>
        <location>Plastid</location>
        <location>Cyanelle</location>
    </subcellularLocation>
</comment>
<comment type="similarity">
    <text evidence="1">Belongs to the ycf23 family.</text>
</comment>
<name>YCF23_CYAPA</name>
<gene>
    <name type="primary">ycf23</name>
</gene>
<evidence type="ECO:0000305" key="1"/>
<feature type="chain" id="PRO_0000217338" description="Uncharacterized protein ycf23">
    <location>
        <begin position="1"/>
        <end position="243"/>
    </location>
</feature>
<keyword id="KW-0194">Cyanelle</keyword>
<keyword id="KW-0934">Plastid</keyword>
<accession>P31605</accession>
<organism>
    <name type="scientific">Cyanophora paradoxa</name>
    <dbReference type="NCBI Taxonomy" id="2762"/>
    <lineage>
        <taxon>Eukaryota</taxon>
        <taxon>Glaucocystophyceae</taxon>
        <taxon>Cyanophoraceae</taxon>
        <taxon>Cyanophora</taxon>
    </lineage>
</organism>
<proteinExistence type="inferred from homology"/>
<reference key="1">
    <citation type="journal article" date="1992" name="Gene">
        <title>The psaC genes of Synechococcus sp. PCC7002 and Cyanophora paradoxa: cloning and sequence analysis.</title>
        <authorList>
            <person name="Rhiel E."/>
            <person name="Stirewalt V.L."/>
            <person name="Gasparich G.E."/>
            <person name="Bryant D.A."/>
        </authorList>
    </citation>
    <scope>NUCLEOTIDE SEQUENCE [GENOMIC DNA]</scope>
</reference>
<reference key="2">
    <citation type="journal article" date="1995" name="Plant Mol. Biol. Rep.">
        <title>Nucleotide sequence of the cyanelle DNA from Cyanophora paradoxa.</title>
        <authorList>
            <person name="Stirewalt V.L."/>
            <person name="Michalowski C.B."/>
            <person name="Loeffelhardt W."/>
            <person name="Bohnert H.J."/>
            <person name="Bryant D.A."/>
        </authorList>
    </citation>
    <scope>NUCLEOTIDE SEQUENCE [LARGE SCALE GENOMIC DNA]</scope>
    <source>
        <strain>UTEX LB 555 / Pringsheim</strain>
    </source>
</reference>
<reference key="3">
    <citation type="book" date="1997" name="Eukaryotism and symbiosis">
        <title>The complete sequence of the cyanelle genome of Cyanophora paradoxa: the genetic complexity of a primitive plastid.</title>
        <editorList>
            <person name="Schenk H.E.A."/>
            <person name="Herrmann R."/>
            <person name="Jeon K.W."/>
            <person name="Mueller N.E."/>
            <person name="Schwemmler W."/>
        </editorList>
        <authorList>
            <person name="Loeffelhardt W."/>
            <person name="Stirewalt V.L."/>
            <person name="Michalowski C.B."/>
            <person name="Annarella M."/>
            <person name="Farley J.Y."/>
            <person name="Schluchter W.M."/>
            <person name="Chung S."/>
            <person name="Newmann-Spallart C."/>
            <person name="Steiner J.M."/>
            <person name="Jakowitsch J."/>
            <person name="Bohnert H.J."/>
            <person name="Bryant D.A."/>
        </authorList>
    </citation>
    <scope>NUCLEOTIDE SEQUENCE [LARGE SCALE GENOMIC DNA]</scope>
    <source>
        <strain>UTEX LB 555 / Pringsheim</strain>
    </source>
</reference>
<dbReference type="EMBL" id="M86239">
    <property type="protein sequence ID" value="AAA65470.1"/>
    <property type="molecule type" value="Genomic_DNA"/>
</dbReference>
<dbReference type="EMBL" id="U30821">
    <property type="protein sequence ID" value="AAA81302.1"/>
    <property type="molecule type" value="Genomic_DNA"/>
</dbReference>
<dbReference type="PIR" id="JS0698">
    <property type="entry name" value="JS0698"/>
</dbReference>
<dbReference type="RefSeq" id="NP_043271.1">
    <property type="nucleotide sequence ID" value="NC_001675.1"/>
</dbReference>
<dbReference type="SMR" id="P31605"/>
<dbReference type="GeneID" id="801633"/>
<dbReference type="GO" id="GO:0009842">
    <property type="term" value="C:cyanelle"/>
    <property type="evidence" value="ECO:0007669"/>
    <property type="project" value="UniProtKB-SubCell"/>
</dbReference>
<dbReference type="InterPro" id="IPR007570">
    <property type="entry name" value="Uncharacterised_Ycf23"/>
</dbReference>
<dbReference type="PANTHER" id="PTHR36895">
    <property type="match status" value="1"/>
</dbReference>
<dbReference type="PANTHER" id="PTHR36895:SF1">
    <property type="entry name" value="YCF23 PROTEIN"/>
    <property type="match status" value="1"/>
</dbReference>
<dbReference type="Pfam" id="PF04481">
    <property type="entry name" value="DUF561"/>
    <property type="match status" value="1"/>
</dbReference>
<dbReference type="SUPFAM" id="SSF51569">
    <property type="entry name" value="Aldolase"/>
    <property type="match status" value="1"/>
</dbReference>
<geneLocation type="cyanelle"/>
<sequence>MNNKIDNFLKQKKLIKVISGLNNFNTTHVIKIAKAASKTNASFIDIAAAPKLVEKVKKEVPNLPICVSAIKPELFVPCVKAGAELIEIGNFDSLYNQGYKINFSDVLSLVKQTRSLLPDTPLSVTIPYLLPLNLQLELAYRLEDLNVDLIQTEGKINKITSLLDNRNIETILPTLASTYLIANNVTIPVICASGLTISTIELPFKLNASGIGIGNAVSKLNSTEEMINLLNEISTRINYSTVL</sequence>
<protein>
    <recommendedName>
        <fullName>Uncharacterized protein ycf23</fullName>
    </recommendedName>
</protein>